<protein>
    <recommendedName>
        <fullName evidence="1">Lipoyl synthase</fullName>
        <ecNumber evidence="1">2.8.1.8</ecNumber>
    </recommendedName>
    <alternativeName>
        <fullName evidence="1">Lip-syn</fullName>
        <shortName evidence="1">LS</shortName>
    </alternativeName>
    <alternativeName>
        <fullName evidence="1">Lipoate synthase</fullName>
    </alternativeName>
    <alternativeName>
        <fullName evidence="1">Lipoic acid synthase</fullName>
    </alternativeName>
    <alternativeName>
        <fullName evidence="1">Sulfur insertion protein LipA</fullName>
    </alternativeName>
</protein>
<dbReference type="EC" id="2.8.1.8" evidence="1"/>
<dbReference type="EMBL" id="CP000803">
    <property type="protein sequence ID" value="ABU61453.1"/>
    <property type="molecule type" value="Genomic_DNA"/>
</dbReference>
<dbReference type="RefSeq" id="WP_003015696.1">
    <property type="nucleotide sequence ID" value="NC_009749.1"/>
</dbReference>
<dbReference type="SMR" id="A7NBV0"/>
<dbReference type="KEGG" id="fta:FTA_0977"/>
<dbReference type="HOGENOM" id="CLU_033144_2_0_6"/>
<dbReference type="UniPathway" id="UPA00538">
    <property type="reaction ID" value="UER00593"/>
</dbReference>
<dbReference type="GO" id="GO:0005737">
    <property type="term" value="C:cytoplasm"/>
    <property type="evidence" value="ECO:0007669"/>
    <property type="project" value="UniProtKB-SubCell"/>
</dbReference>
<dbReference type="GO" id="GO:0051539">
    <property type="term" value="F:4 iron, 4 sulfur cluster binding"/>
    <property type="evidence" value="ECO:0007669"/>
    <property type="project" value="UniProtKB-UniRule"/>
</dbReference>
<dbReference type="GO" id="GO:0016992">
    <property type="term" value="F:lipoate synthase activity"/>
    <property type="evidence" value="ECO:0007669"/>
    <property type="project" value="UniProtKB-UniRule"/>
</dbReference>
<dbReference type="GO" id="GO:0046872">
    <property type="term" value="F:metal ion binding"/>
    <property type="evidence" value="ECO:0007669"/>
    <property type="project" value="UniProtKB-KW"/>
</dbReference>
<dbReference type="FunFam" id="3.20.20.70:FF:000040">
    <property type="entry name" value="Lipoyl synthase"/>
    <property type="match status" value="1"/>
</dbReference>
<dbReference type="Gene3D" id="3.20.20.70">
    <property type="entry name" value="Aldolase class I"/>
    <property type="match status" value="1"/>
</dbReference>
<dbReference type="HAMAP" id="MF_00206">
    <property type="entry name" value="Lipoyl_synth"/>
    <property type="match status" value="1"/>
</dbReference>
<dbReference type="InterPro" id="IPR013785">
    <property type="entry name" value="Aldolase_TIM"/>
</dbReference>
<dbReference type="InterPro" id="IPR006638">
    <property type="entry name" value="Elp3/MiaA/NifB-like_rSAM"/>
</dbReference>
<dbReference type="InterPro" id="IPR031691">
    <property type="entry name" value="LIAS_N"/>
</dbReference>
<dbReference type="InterPro" id="IPR003698">
    <property type="entry name" value="Lipoyl_synth"/>
</dbReference>
<dbReference type="InterPro" id="IPR007197">
    <property type="entry name" value="rSAM"/>
</dbReference>
<dbReference type="NCBIfam" id="TIGR00510">
    <property type="entry name" value="lipA"/>
    <property type="match status" value="1"/>
</dbReference>
<dbReference type="NCBIfam" id="NF004019">
    <property type="entry name" value="PRK05481.1"/>
    <property type="match status" value="1"/>
</dbReference>
<dbReference type="NCBIfam" id="NF009544">
    <property type="entry name" value="PRK12928.1"/>
    <property type="match status" value="1"/>
</dbReference>
<dbReference type="PANTHER" id="PTHR10949">
    <property type="entry name" value="LIPOYL SYNTHASE"/>
    <property type="match status" value="1"/>
</dbReference>
<dbReference type="PANTHER" id="PTHR10949:SF0">
    <property type="entry name" value="LIPOYL SYNTHASE, MITOCHONDRIAL"/>
    <property type="match status" value="1"/>
</dbReference>
<dbReference type="Pfam" id="PF16881">
    <property type="entry name" value="LIAS_N"/>
    <property type="match status" value="1"/>
</dbReference>
<dbReference type="Pfam" id="PF04055">
    <property type="entry name" value="Radical_SAM"/>
    <property type="match status" value="1"/>
</dbReference>
<dbReference type="PIRSF" id="PIRSF005963">
    <property type="entry name" value="Lipoyl_synth"/>
    <property type="match status" value="1"/>
</dbReference>
<dbReference type="SFLD" id="SFLDF00271">
    <property type="entry name" value="lipoyl_synthase"/>
    <property type="match status" value="1"/>
</dbReference>
<dbReference type="SFLD" id="SFLDG01058">
    <property type="entry name" value="lipoyl_synthase_like"/>
    <property type="match status" value="1"/>
</dbReference>
<dbReference type="SMART" id="SM00729">
    <property type="entry name" value="Elp3"/>
    <property type="match status" value="1"/>
</dbReference>
<dbReference type="SUPFAM" id="SSF102114">
    <property type="entry name" value="Radical SAM enzymes"/>
    <property type="match status" value="1"/>
</dbReference>
<dbReference type="PROSITE" id="PS51918">
    <property type="entry name" value="RADICAL_SAM"/>
    <property type="match status" value="1"/>
</dbReference>
<feature type="chain" id="PRO_0000325250" description="Lipoyl synthase">
    <location>
        <begin position="1"/>
        <end position="327"/>
    </location>
</feature>
<feature type="domain" description="Radical SAM core" evidence="2">
    <location>
        <begin position="83"/>
        <end position="302"/>
    </location>
</feature>
<feature type="binding site" evidence="1">
    <location>
        <position position="72"/>
    </location>
    <ligand>
        <name>[4Fe-4S] cluster</name>
        <dbReference type="ChEBI" id="CHEBI:49883"/>
        <label>1</label>
    </ligand>
</feature>
<feature type="binding site" evidence="1">
    <location>
        <position position="77"/>
    </location>
    <ligand>
        <name>[4Fe-4S] cluster</name>
        <dbReference type="ChEBI" id="CHEBI:49883"/>
        <label>1</label>
    </ligand>
</feature>
<feature type="binding site" evidence="1">
    <location>
        <position position="83"/>
    </location>
    <ligand>
        <name>[4Fe-4S] cluster</name>
        <dbReference type="ChEBI" id="CHEBI:49883"/>
        <label>1</label>
    </ligand>
</feature>
<feature type="binding site" evidence="1">
    <location>
        <position position="98"/>
    </location>
    <ligand>
        <name>[4Fe-4S] cluster</name>
        <dbReference type="ChEBI" id="CHEBI:49883"/>
        <label>2</label>
        <note>4Fe-4S-S-AdoMet</note>
    </ligand>
</feature>
<feature type="binding site" evidence="1">
    <location>
        <position position="102"/>
    </location>
    <ligand>
        <name>[4Fe-4S] cluster</name>
        <dbReference type="ChEBI" id="CHEBI:49883"/>
        <label>2</label>
        <note>4Fe-4S-S-AdoMet</note>
    </ligand>
</feature>
<feature type="binding site" evidence="1">
    <location>
        <position position="105"/>
    </location>
    <ligand>
        <name>[4Fe-4S] cluster</name>
        <dbReference type="ChEBI" id="CHEBI:49883"/>
        <label>2</label>
        <note>4Fe-4S-S-AdoMet</note>
    </ligand>
</feature>
<feature type="binding site" evidence="1">
    <location>
        <position position="313"/>
    </location>
    <ligand>
        <name>[4Fe-4S] cluster</name>
        <dbReference type="ChEBI" id="CHEBI:49883"/>
        <label>1</label>
    </ligand>
</feature>
<accession>A7NBV0</accession>
<proteinExistence type="inferred from homology"/>
<sequence>MKEISGIKVKVESGSKYTTDHGFYAVKDGIRNKKENAVHVRKPDWLKVQKQDSKEYLKVKSITKKHKLSTVCEEARCPNINECWSHGTATIMLMGSVCTRACKFCSVDTGNPKGWLDKDEPMNAAESVKLMGLEYVVLTSVDRDDLEDGGAGHYAATITAIKNLDENIKVEALTPDFAGINENIDKIINTKVDVIAQNIETVERLTHPVRDPRAGYWQTLNFLKYVKQKSPNVLTKTSIMVGLGETDEEIYKTMDDARSVGVDIITLGQYMQPTKHHLSVERFVTPQQFEEYRKVGLEKGFLEVASGPMVRSSYRADRVFKRNNLDL</sequence>
<evidence type="ECO:0000255" key="1">
    <source>
        <dbReference type="HAMAP-Rule" id="MF_00206"/>
    </source>
</evidence>
<evidence type="ECO:0000255" key="2">
    <source>
        <dbReference type="PROSITE-ProRule" id="PRU01266"/>
    </source>
</evidence>
<reference key="1">
    <citation type="journal article" date="2009" name="PLoS ONE">
        <title>Complete genome sequence of Francisella tularensis subspecies holarctica FTNF002-00.</title>
        <authorList>
            <person name="Barabote R.D."/>
            <person name="Xie G."/>
            <person name="Brettin T.S."/>
            <person name="Hinrichs S.H."/>
            <person name="Fey P.D."/>
            <person name="Jay J.J."/>
            <person name="Engle J.L."/>
            <person name="Godbole S.D."/>
            <person name="Noronha J.M."/>
            <person name="Scheuermann R.H."/>
            <person name="Zhou L.W."/>
            <person name="Lion C."/>
            <person name="Dempsey M.P."/>
        </authorList>
    </citation>
    <scope>NUCLEOTIDE SEQUENCE [LARGE SCALE GENOMIC DNA]</scope>
    <source>
        <strain>FTNF002-00 / FTA</strain>
    </source>
</reference>
<organism>
    <name type="scientific">Francisella tularensis subsp. holarctica (strain FTNF002-00 / FTA)</name>
    <dbReference type="NCBI Taxonomy" id="458234"/>
    <lineage>
        <taxon>Bacteria</taxon>
        <taxon>Pseudomonadati</taxon>
        <taxon>Pseudomonadota</taxon>
        <taxon>Gammaproteobacteria</taxon>
        <taxon>Thiotrichales</taxon>
        <taxon>Francisellaceae</taxon>
        <taxon>Francisella</taxon>
    </lineage>
</organism>
<comment type="function">
    <text evidence="1">Catalyzes the radical-mediated insertion of two sulfur atoms into the C-6 and C-8 positions of the octanoyl moiety bound to the lipoyl domains of lipoate-dependent enzymes, thereby converting the octanoylated domains into lipoylated derivatives.</text>
</comment>
<comment type="catalytic activity">
    <reaction evidence="1">
        <text>[[Fe-S] cluster scaffold protein carrying a second [4Fe-4S](2+) cluster] + N(6)-octanoyl-L-lysyl-[protein] + 2 oxidized [2Fe-2S]-[ferredoxin] + 2 S-adenosyl-L-methionine + 4 H(+) = [[Fe-S] cluster scaffold protein] + N(6)-[(R)-dihydrolipoyl]-L-lysyl-[protein] + 4 Fe(3+) + 2 hydrogen sulfide + 2 5'-deoxyadenosine + 2 L-methionine + 2 reduced [2Fe-2S]-[ferredoxin]</text>
        <dbReference type="Rhea" id="RHEA:16585"/>
        <dbReference type="Rhea" id="RHEA-COMP:9928"/>
        <dbReference type="Rhea" id="RHEA-COMP:10000"/>
        <dbReference type="Rhea" id="RHEA-COMP:10001"/>
        <dbReference type="Rhea" id="RHEA-COMP:10475"/>
        <dbReference type="Rhea" id="RHEA-COMP:14568"/>
        <dbReference type="Rhea" id="RHEA-COMP:14569"/>
        <dbReference type="ChEBI" id="CHEBI:15378"/>
        <dbReference type="ChEBI" id="CHEBI:17319"/>
        <dbReference type="ChEBI" id="CHEBI:29034"/>
        <dbReference type="ChEBI" id="CHEBI:29919"/>
        <dbReference type="ChEBI" id="CHEBI:33722"/>
        <dbReference type="ChEBI" id="CHEBI:33737"/>
        <dbReference type="ChEBI" id="CHEBI:33738"/>
        <dbReference type="ChEBI" id="CHEBI:57844"/>
        <dbReference type="ChEBI" id="CHEBI:59789"/>
        <dbReference type="ChEBI" id="CHEBI:78809"/>
        <dbReference type="ChEBI" id="CHEBI:83100"/>
        <dbReference type="EC" id="2.8.1.8"/>
    </reaction>
</comment>
<comment type="cofactor">
    <cofactor evidence="1">
        <name>[4Fe-4S] cluster</name>
        <dbReference type="ChEBI" id="CHEBI:49883"/>
    </cofactor>
    <text evidence="1">Binds 2 [4Fe-4S] clusters per subunit. One cluster is coordinated with 3 cysteines and an exchangeable S-adenosyl-L-methionine.</text>
</comment>
<comment type="pathway">
    <text evidence="1">Protein modification; protein lipoylation via endogenous pathway; protein N(6)-(lipoyl)lysine from octanoyl-[acyl-carrier-protein]: step 2/2.</text>
</comment>
<comment type="subcellular location">
    <subcellularLocation>
        <location evidence="1">Cytoplasm</location>
    </subcellularLocation>
</comment>
<comment type="similarity">
    <text evidence="1">Belongs to the radical SAM superfamily. Lipoyl synthase family.</text>
</comment>
<keyword id="KW-0004">4Fe-4S</keyword>
<keyword id="KW-0963">Cytoplasm</keyword>
<keyword id="KW-0408">Iron</keyword>
<keyword id="KW-0411">Iron-sulfur</keyword>
<keyword id="KW-0479">Metal-binding</keyword>
<keyword id="KW-0949">S-adenosyl-L-methionine</keyword>
<keyword id="KW-0808">Transferase</keyword>
<gene>
    <name evidence="1" type="primary">lipA</name>
    <name type="ordered locus">FTA_0977</name>
</gene>
<name>LIPA_FRATF</name>